<name>RL1_STRPG</name>
<sequence length="229" mass="24394">MAKKSKQMRAALEKVDSTKAYSVEEAVALVKETNFAKFDASVEVAYNLNIDVRKADQQIRGAMVLPNGTGKTQRVLVFARGAKAEEAKAAGADFVGEDDLVAKINGGWLDFDVVIATPDMMAIVGRLGRVLGPRNLMPNPKTGTVTMDVAKAVEESKGGKITYRADKAGNVQALIGKVSFDADKLVENFKAFHDVMAKAKPATAKGTYMANVSITSTQGVGIKVDPNSL</sequence>
<proteinExistence type="inferred from homology"/>
<evidence type="ECO:0000255" key="1">
    <source>
        <dbReference type="HAMAP-Rule" id="MF_01318"/>
    </source>
</evidence>
<evidence type="ECO:0000305" key="2"/>
<keyword id="KW-0678">Repressor</keyword>
<keyword id="KW-0687">Ribonucleoprotein</keyword>
<keyword id="KW-0689">Ribosomal protein</keyword>
<keyword id="KW-0694">RNA-binding</keyword>
<keyword id="KW-0699">rRNA-binding</keyword>
<keyword id="KW-0810">Translation regulation</keyword>
<keyword id="KW-0820">tRNA-binding</keyword>
<comment type="function">
    <text evidence="1">Binds directly to 23S rRNA. The L1 stalk is quite mobile in the ribosome, and is involved in E site tRNA release.</text>
</comment>
<comment type="function">
    <text evidence="1">Protein L1 is also a translational repressor protein, it controls the translation of the L11 operon by binding to its mRNA.</text>
</comment>
<comment type="subunit">
    <text evidence="1">Part of the 50S ribosomal subunit.</text>
</comment>
<comment type="similarity">
    <text evidence="1">Belongs to the universal ribosomal protein uL1 family.</text>
</comment>
<organism>
    <name type="scientific">Streptococcus pyogenes serotype M5 (strain Manfredo)</name>
    <dbReference type="NCBI Taxonomy" id="160491"/>
    <lineage>
        <taxon>Bacteria</taxon>
        <taxon>Bacillati</taxon>
        <taxon>Bacillota</taxon>
        <taxon>Bacilli</taxon>
        <taxon>Lactobacillales</taxon>
        <taxon>Streptococcaceae</taxon>
        <taxon>Streptococcus</taxon>
    </lineage>
</organism>
<dbReference type="EMBL" id="AM295007">
    <property type="protein sequence ID" value="CAM30811.1"/>
    <property type="molecule type" value="Genomic_DNA"/>
</dbReference>
<dbReference type="RefSeq" id="WP_002985768.1">
    <property type="nucleotide sequence ID" value="NC_009332.1"/>
</dbReference>
<dbReference type="SMR" id="A2RG32"/>
<dbReference type="KEGG" id="spf:SpyM51490"/>
<dbReference type="HOGENOM" id="CLU_062853_0_0_9"/>
<dbReference type="GO" id="GO:0015934">
    <property type="term" value="C:large ribosomal subunit"/>
    <property type="evidence" value="ECO:0007669"/>
    <property type="project" value="InterPro"/>
</dbReference>
<dbReference type="GO" id="GO:0019843">
    <property type="term" value="F:rRNA binding"/>
    <property type="evidence" value="ECO:0007669"/>
    <property type="project" value="UniProtKB-UniRule"/>
</dbReference>
<dbReference type="GO" id="GO:0003735">
    <property type="term" value="F:structural constituent of ribosome"/>
    <property type="evidence" value="ECO:0007669"/>
    <property type="project" value="InterPro"/>
</dbReference>
<dbReference type="GO" id="GO:0000049">
    <property type="term" value="F:tRNA binding"/>
    <property type="evidence" value="ECO:0007669"/>
    <property type="project" value="UniProtKB-KW"/>
</dbReference>
<dbReference type="GO" id="GO:0006417">
    <property type="term" value="P:regulation of translation"/>
    <property type="evidence" value="ECO:0007669"/>
    <property type="project" value="UniProtKB-KW"/>
</dbReference>
<dbReference type="GO" id="GO:0006412">
    <property type="term" value="P:translation"/>
    <property type="evidence" value="ECO:0007669"/>
    <property type="project" value="UniProtKB-UniRule"/>
</dbReference>
<dbReference type="CDD" id="cd00403">
    <property type="entry name" value="Ribosomal_L1"/>
    <property type="match status" value="1"/>
</dbReference>
<dbReference type="FunFam" id="3.40.50.790:FF:000001">
    <property type="entry name" value="50S ribosomal protein L1"/>
    <property type="match status" value="1"/>
</dbReference>
<dbReference type="Gene3D" id="3.30.190.20">
    <property type="match status" value="1"/>
</dbReference>
<dbReference type="Gene3D" id="3.40.50.790">
    <property type="match status" value="1"/>
</dbReference>
<dbReference type="HAMAP" id="MF_01318_B">
    <property type="entry name" value="Ribosomal_uL1_B"/>
    <property type="match status" value="1"/>
</dbReference>
<dbReference type="InterPro" id="IPR005878">
    <property type="entry name" value="Ribosom_uL1_bac-type"/>
</dbReference>
<dbReference type="InterPro" id="IPR002143">
    <property type="entry name" value="Ribosomal_uL1"/>
</dbReference>
<dbReference type="InterPro" id="IPR023674">
    <property type="entry name" value="Ribosomal_uL1-like"/>
</dbReference>
<dbReference type="InterPro" id="IPR028364">
    <property type="entry name" value="Ribosomal_uL1/biogenesis"/>
</dbReference>
<dbReference type="InterPro" id="IPR016095">
    <property type="entry name" value="Ribosomal_uL1_3-a/b-sand"/>
</dbReference>
<dbReference type="InterPro" id="IPR023673">
    <property type="entry name" value="Ribosomal_uL1_CS"/>
</dbReference>
<dbReference type="NCBIfam" id="TIGR01169">
    <property type="entry name" value="rplA_bact"/>
    <property type="match status" value="1"/>
</dbReference>
<dbReference type="PANTHER" id="PTHR36427">
    <property type="entry name" value="54S RIBOSOMAL PROTEIN L1, MITOCHONDRIAL"/>
    <property type="match status" value="1"/>
</dbReference>
<dbReference type="PANTHER" id="PTHR36427:SF3">
    <property type="entry name" value="LARGE RIBOSOMAL SUBUNIT PROTEIN UL1M"/>
    <property type="match status" value="1"/>
</dbReference>
<dbReference type="Pfam" id="PF00687">
    <property type="entry name" value="Ribosomal_L1"/>
    <property type="match status" value="1"/>
</dbReference>
<dbReference type="PIRSF" id="PIRSF002155">
    <property type="entry name" value="Ribosomal_L1"/>
    <property type="match status" value="1"/>
</dbReference>
<dbReference type="SUPFAM" id="SSF56808">
    <property type="entry name" value="Ribosomal protein L1"/>
    <property type="match status" value="1"/>
</dbReference>
<dbReference type="PROSITE" id="PS01199">
    <property type="entry name" value="RIBOSOMAL_L1"/>
    <property type="match status" value="1"/>
</dbReference>
<protein>
    <recommendedName>
        <fullName evidence="1">Large ribosomal subunit protein uL1</fullName>
    </recommendedName>
    <alternativeName>
        <fullName evidence="2">50S ribosomal protein L1</fullName>
    </alternativeName>
</protein>
<gene>
    <name evidence="1" type="primary">rplA</name>
    <name type="ordered locus">SpyM51490</name>
</gene>
<reference key="1">
    <citation type="journal article" date="2007" name="J. Bacteriol.">
        <title>Complete genome of acute rheumatic fever-associated serotype M5 Streptococcus pyogenes strain Manfredo.</title>
        <authorList>
            <person name="Holden M.T.G."/>
            <person name="Scott A."/>
            <person name="Cherevach I."/>
            <person name="Chillingworth T."/>
            <person name="Churcher C."/>
            <person name="Cronin A."/>
            <person name="Dowd L."/>
            <person name="Feltwell T."/>
            <person name="Hamlin N."/>
            <person name="Holroyd S."/>
            <person name="Jagels K."/>
            <person name="Moule S."/>
            <person name="Mungall K."/>
            <person name="Quail M.A."/>
            <person name="Price C."/>
            <person name="Rabbinowitsch E."/>
            <person name="Sharp S."/>
            <person name="Skelton J."/>
            <person name="Whitehead S."/>
            <person name="Barrell B.G."/>
            <person name="Kehoe M."/>
            <person name="Parkhill J."/>
        </authorList>
    </citation>
    <scope>NUCLEOTIDE SEQUENCE [LARGE SCALE GENOMIC DNA]</scope>
    <source>
        <strain>Manfredo</strain>
    </source>
</reference>
<accession>A2RG32</accession>
<feature type="chain" id="PRO_0000308118" description="Large ribosomal subunit protein uL1">
    <location>
        <begin position="1"/>
        <end position="229"/>
    </location>
</feature>